<comment type="function">
    <text evidence="3 4 5 6 7 8 9 10 11 12">Transcription factor which binds the E box motif 5'-CA[TC][AG]TG-3' (PubMed:11076762, PubMed:14701877, PubMed:19632181). Plays a key role in the anchor cell/ventral uterine precursor cell (AC/VU) decision; required for VU fate (PubMed:14701877, PubMed:31402303). Regulates expression of lin-12/Notch receptor and putative ligand lag-2 in the presumptive AC and presumptive VU cells (PubMed:31402303). Modulates expression of lag-2 in the gonadal distal tip cells (DTCs) (PubMed:14701877, PubMed:19376107). Involved in formation of the polarised cell membrane of the AC and thus facilitates invasion across the gonadal basement membrane, acting via transcriptional modulation of multiple genes (PubMed:21784067). Involved in specification of the hermaphrodite DTC and the male linker cell, perhaps acting in concert with the homeobox protein, ceh-22 (PubMed:19376107). Plays a role in regulation of migration of DTCs and the modulation of expression of alpha integrin ina-1 and ADAMTS protease gon-1 (PubMed:17588558, PubMed:25982859). Required for DTC maintenance, and for function of the DTC as a niche for germline stem cells (PubMed:19376107). Plays a role in cell-autonomously establishing a neuronal left-right asymmetry (PubMed:21041366). Required for specification of cell fate, acting in concert with lin-32, in the development of the male-specific genital sensilla (simple sense organs) known as rays (PubMed:11076762). Negatively modulates lifespan, perhaps acting by regulating expression of arginine kinases, which in turn results in altered metabolism and homeostasis of reactive oxygen species (ROS) (PubMed:32203922).</text>
</comment>
<comment type="subunit">
    <text evidence="3 5 7 8">Interacts with helix-loop-helix protein ngn-1; the interaction is direct (PubMed:21041366). Efficient DNA binding probably requires dimerization with another helix-loop-helix protein (PubMed:11076762, PubMed:19632181). Forms a heterodimer with helix-loop-helix protein hlh-12 (PubMed:17588558). Forms a heterodimer with lin-32 (PubMed:11076762). May form a heterodimer with hlh-10 (PubMed:19632181).</text>
</comment>
<comment type="subcellular location">
    <subcellularLocation>
        <location evidence="3">Nucleus</location>
    </subcellularLocation>
</comment>
<comment type="developmental stage">
    <text evidence="3 4 6 7 8 9 11">During male tail development, expressed in each of the nine Rn cells and in the anterior daughter cell, the ray neuroblast (at protein level) (PubMed:11076762). First expressed at the comma stage of embryogenesis (PubMed:19632181). Expressed asymmetrically, in the mother cell of the MI pharyngeal motorneuron but not in the mother cell of the e3D epithelial cell (PubMed:21041366). Expressed during hermaphrodite gonadogenesis, in the two somatic gonadal progenitor (SGP) cells, Z1.ppp and Z4.aaa, precursors to the anchor cell (AC) and the ventral uterine precursor cell (VU), but not detected in their sister cells, Z1.ppa and Z4.aap (PubMed:14701877, PubMed:19376107, PubMed:21784067). Expressed in both pre-AC and pre-VU cells, and after the AC/VU decision, expression is reduced in the VU and its descendants; however, expression persists in the AC through the time of basement membrane invasion (PubMed:21784067, PubMed:31402303). Expressed in the gonadal distal tip cells (DTCs) throughout development and in adults (PubMed:19376107).</text>
</comment>
<comment type="disruption phenotype">
    <text evidence="4 5 6 8 9 10 12">RNAi-mediated knockdown in the early larval L1 stage causes both somatic gonadal progenitor (SGP) cells, Z1.ppp and Z4.aaa, to assume the ventral uterine precursor cell (VU) identity; whereas, if RNAi is applied during the late larval L1 stage, or at the larval L2 stage, both assume the anchor cell (AC) identity (PubMed:14701877, PubMed:21784067). RNAi-mediated knockdown applied at the time of the larval stage L1/L2 molt causes defects in invasion of the basement membrane by the AC (PubMed:21784067). RNAi-mediated knockdown causes the MI pharyngeal motorneuron to transform into an e3D-like epithelial cell (PubMed:21041366). RNAi-mediated knockdown reduces expression of alpha integrin ina-1 and of ADAMTS protease gon-1, and causes defects in migration of the gonadal distal tip cells (DTCs) (PubMed:17588558, PubMed:25982859). RNAi-mediated knockdown causes reduction in the number of hermaphrodites with DTCs, diminishes formation of elongated gonadal arms and reduces expression of lag-2 (PubMed:19376107). RNAi-mediated knockdown during larval stage L3 causes a subsequent three-fold reduction in germ cell number in the adult hermaphrodite gonad (PubMed:19376107). RNAi-mediated knockdown increases lifespan, reduces fertility, improves the response to proteotoxic stress, alters the response to reactive oxygen species (ROS) and reduces expression of arginine kinases such as argk-1 (PubMed:32203922).</text>
</comment>
<proteinExistence type="evidence at protein level"/>
<reference evidence="14 15" key="1">
    <citation type="submission" date="1994-08" db="EMBL/GenBank/DDBJ databases">
        <title>cDNA sequence of the C. elegans homolog of the vertebrate basic-helix-loop-helix transcription factor, E12/47.</title>
        <authorList>
            <person name="Krause M.W."/>
            <person name="Fire A."/>
        </authorList>
    </citation>
    <scope>NUCLEOTIDE SEQUENCE [GENOMIC DNA / MRNA]</scope>
    <source>
        <strain evidence="14 15">Bristol N2</strain>
    </source>
</reference>
<reference evidence="16" key="2">
    <citation type="journal article" date="1998" name="Science">
        <title>Genome sequence of the nematode C. elegans: a platform for investigating biology.</title>
        <authorList>
            <consortium name="The C. elegans sequencing consortium"/>
        </authorList>
    </citation>
    <scope>NUCLEOTIDE SEQUENCE [LARGE SCALE GENOMIC DNA]</scope>
    <source>
        <strain evidence="16">Bristol N2</strain>
    </source>
</reference>
<reference evidence="13" key="3">
    <citation type="journal article" date="2000" name="Development">
        <title>The basic helix-loop-helix transcription factors LIN-32 and HLH-2 function together in multiple steps of a C. elegans neuronal sublineage.</title>
        <authorList>
            <person name="Portman D.S."/>
            <person name="Emmons S.W."/>
        </authorList>
    </citation>
    <scope>FUNCTION</scope>
    <scope>INTERACTION WITH LIN-32</scope>
    <scope>SUBCELLULAR LOCATION</scope>
    <scope>DEVELOPMENTAL STAGE</scope>
    <scope>MUTAGENESIS OF ARG-316 AND VAL-352</scope>
</reference>
<reference evidence="13" key="4">
    <citation type="journal article" date="2003" name="Genes Dev.">
        <title>Post-transcriptional regulation of the E/Daughterless ortholog HLH-2, negative feedback, and birth order bias during the AC/VU decision in C. elegans.</title>
        <authorList>
            <person name="Karp X."/>
            <person name="Greenwald I."/>
        </authorList>
    </citation>
    <scope>FUNCTION</scope>
    <scope>DEVELOPMENTAL STAGE</scope>
    <scope>DISRUPTION PHENOTYPE</scope>
</reference>
<reference evidence="13" key="5">
    <citation type="journal article" date="2007" name="Dev. Biol.">
        <title>bHLH transcription factors regulate organ morphogenesis via activation of an ADAMTS protease in C. elegans.</title>
        <authorList>
            <person name="Tamai K.K."/>
            <person name="Nishiwaki K."/>
        </authorList>
    </citation>
    <scope>FUNCTION</scope>
    <scope>INTERACTION WITH HLH-12</scope>
    <scope>DISRUPTION PHENOTYPE</scope>
</reference>
<reference evidence="13" key="6">
    <citation type="journal article" date="2009" name="Cell">
        <title>A multiparameter network reveals extensive divergence between C. elegans bHLH transcription factors.</title>
        <authorList>
            <person name="Grove C.A."/>
            <person name="De Masi F."/>
            <person name="Barrasa M.I."/>
            <person name="Newburger D.E."/>
            <person name="Alkema M.J."/>
            <person name="Bulyk M.L."/>
            <person name="Walhout A.J.M."/>
        </authorList>
    </citation>
    <scope>FUNCTION</scope>
    <scope>INTERACTION WITH HLH-10</scope>
    <scope>DEVELOPMENTAL STAGE</scope>
</reference>
<reference evidence="13" key="7">
    <citation type="journal article" date="2009" name="Dev. Biol.">
        <title>C. elegans HLH-2/E/Daughterless controls key regulatory cells during gonadogenesis.</title>
        <authorList>
            <person name="Chesney M.A."/>
            <person name="Lam N."/>
            <person name="Morgan D.E."/>
            <person name="Phillips B.T."/>
            <person name="Kimble J."/>
        </authorList>
    </citation>
    <scope>FUNCTION</scope>
    <scope>DEVELOPMENTAL STAGE</scope>
    <scope>DISRUPTION PHENOTYPE</scope>
</reference>
<reference evidence="13" key="8">
    <citation type="journal article" date="2010" name="Development">
        <title>Otx-dependent expression of proneural bHLH genes establishes a neuronal bilateral asymmetry in C. elegans.</title>
        <authorList>
            <person name="Nakano S."/>
            <person name="Ellis R.E."/>
            <person name="Horvitz H.R."/>
        </authorList>
    </citation>
    <scope>FUNCTION</scope>
    <scope>INTERACTION WITH NGN-1</scope>
    <scope>DEVELOPMENTAL STAGE</scope>
    <scope>DISRUPTION PHENOTYPE</scope>
</reference>
<reference evidence="13" key="9">
    <citation type="journal article" date="2011" name="Dev. Biol.">
        <title>The transcription factor HLH-2/E/Daughterless regulates anchor cell invasion across basement membrane in C. elegans.</title>
        <authorList>
            <person name="Schindler A.J."/>
            <person name="Sherwood D.R."/>
        </authorList>
    </citation>
    <scope>FUNCTION</scope>
    <scope>DEVELOPMENTAL STAGE</scope>
    <scope>DISRUPTION PHENOTYPE</scope>
</reference>
<reference evidence="13" key="10">
    <citation type="journal article" date="2015" name="Gene">
        <title>Transcription factor hlh-2/E/Daughterless drives expression of alpha integrin ina-1 during DTC migration in C. elegans.</title>
        <authorList>
            <person name="Meighan C.M."/>
            <person name="Kann A.P."/>
            <person name="Egress E.R."/>
        </authorList>
    </citation>
    <scope>FUNCTION</scope>
    <scope>DISRUPTION PHENOTYPE</scope>
</reference>
<reference evidence="13" key="11">
    <citation type="journal article" date="2019" name="Curr. Biol.">
        <title>HLH-2/E2A Expression Links Stochastic and Deterministic Elements of a Cell Fate Decision during C. elegans Gonadogenesis.</title>
        <authorList>
            <person name="Attner M.A."/>
            <person name="Keil W."/>
            <person name="Benavidez J.M."/>
            <person name="Greenwald I."/>
        </authorList>
    </citation>
    <scope>FUNCTION</scope>
    <scope>DEVELOPMENTAL STAGE</scope>
</reference>
<reference evidence="13" key="12">
    <citation type="journal article" date="2020" name="Redox Biol.">
        <title>Redox-mediated regulation of aging and healthspan by an evolutionarily conserved transcription factor HLH-2/Tcf3/E2A.</title>
        <authorList>
            <person name="Rozanov L."/>
            <person name="Ravichandran M."/>
            <person name="Grigolon G."/>
            <person name="Zanellati M.C."/>
            <person name="Mansfeld J."/>
            <person name="Zarse K."/>
            <person name="Barzilai N."/>
            <person name="Atzmon G."/>
            <person name="Fischer F."/>
            <person name="Ristow M."/>
        </authorList>
    </citation>
    <scope>FUNCTION</scope>
    <scope>DISRUPTION PHENOTYPE</scope>
</reference>
<organism evidence="16">
    <name type="scientific">Caenorhabditis elegans</name>
    <dbReference type="NCBI Taxonomy" id="6239"/>
    <lineage>
        <taxon>Eukaryota</taxon>
        <taxon>Metazoa</taxon>
        <taxon>Ecdysozoa</taxon>
        <taxon>Nematoda</taxon>
        <taxon>Chromadorea</taxon>
        <taxon>Rhabditida</taxon>
        <taxon>Rhabditina</taxon>
        <taxon>Rhabditomorpha</taxon>
        <taxon>Rhabditoidea</taxon>
        <taxon>Rhabditidae</taxon>
        <taxon>Peloderinae</taxon>
        <taxon>Caenorhabditis</taxon>
    </lineage>
</organism>
<accession>G5EEG9</accession>
<accession>Q17326</accession>
<accession>Q17358</accession>
<sequence length="399" mass="43193">MADPNSQLTSATTVATAAIAQPQVMLPNAYDYPYNIDPTTIQMPDYWSGYHLNPYPPMQTTDIDYSSAFLPTHPPTETPASVAAPTSATSDIKPIHATSSTSTTAPSTAPAPTSTTDVLELKPTTAPATNSAETSAIVAPQPLTNLTAPIDAMSSMYTWPQTYPGYLPPSEDNKASEAVNPYISIPPTYTFGADPSVADFSSYQQQLAGQPNGLGGDTNLVDYNHQFPPAGMSPHFDPNGYPGMTGMPPGSSASSVRNDKSASRATSRRRVQGPPSSGIPTRHSSSSRLSDNESMSDDKDTDRRSQNNARERVRVRDINSAFKELGRMCTQHNQNTERNQTKLGILHNAVSVITQLEEQVRQRNMNPKVMAGMKRKPDDDKMKMLDDNAPSAQFGHPRF</sequence>
<evidence type="ECO:0000255" key="1">
    <source>
        <dbReference type="PROSITE-ProRule" id="PRU00981"/>
    </source>
</evidence>
<evidence type="ECO:0000256" key="2">
    <source>
        <dbReference type="SAM" id="MobiDB-lite"/>
    </source>
</evidence>
<evidence type="ECO:0000269" key="3">
    <source>
    </source>
</evidence>
<evidence type="ECO:0000269" key="4">
    <source>
    </source>
</evidence>
<evidence type="ECO:0000269" key="5">
    <source>
    </source>
</evidence>
<evidence type="ECO:0000269" key="6">
    <source>
    </source>
</evidence>
<evidence type="ECO:0000269" key="7">
    <source>
    </source>
</evidence>
<evidence type="ECO:0000269" key="8">
    <source>
    </source>
</evidence>
<evidence type="ECO:0000269" key="9">
    <source>
    </source>
</evidence>
<evidence type="ECO:0000269" key="10">
    <source>
    </source>
</evidence>
<evidence type="ECO:0000269" key="11">
    <source>
    </source>
</evidence>
<evidence type="ECO:0000269" key="12">
    <source>
    </source>
</evidence>
<evidence type="ECO:0000305" key="13"/>
<evidence type="ECO:0000312" key="14">
    <source>
        <dbReference type="EMBL" id="AAA21347.1"/>
    </source>
</evidence>
<evidence type="ECO:0000312" key="15">
    <source>
        <dbReference type="EMBL" id="AAC13874.1"/>
    </source>
</evidence>
<evidence type="ECO:0000312" key="16">
    <source>
        <dbReference type="Proteomes" id="UP000001940"/>
    </source>
</evidence>
<evidence type="ECO:0000312" key="17">
    <source>
        <dbReference type="WormBase" id="M05B5.5a"/>
    </source>
</evidence>
<protein>
    <recommendedName>
        <fullName evidence="17">Helix-loop-helix protein hlh-2</fullName>
    </recommendedName>
</protein>
<name>HLH2_CAEEL</name>
<gene>
    <name evidence="17" type="primary">hlh-2</name>
    <name evidence="17" type="ORF">M05B5.5</name>
</gene>
<keyword id="KW-0217">Developmental protein</keyword>
<keyword id="KW-0238">DNA-binding</keyword>
<keyword id="KW-0524">Neurogenesis</keyword>
<keyword id="KW-0539">Nucleus</keyword>
<keyword id="KW-1185">Reference proteome</keyword>
<keyword id="KW-0804">Transcription</keyword>
<keyword id="KW-0805">Transcription regulation</keyword>
<feature type="chain" id="PRO_0000453281" description="Helix-loop-helix protein hlh-2">
    <location>
        <begin position="1"/>
        <end position="399"/>
    </location>
</feature>
<feature type="domain" description="bHLH" evidence="1">
    <location>
        <begin position="302"/>
        <end position="356"/>
    </location>
</feature>
<feature type="region of interest" description="Disordered" evidence="2">
    <location>
        <begin position="66"/>
        <end position="119"/>
    </location>
</feature>
<feature type="region of interest" description="Disordered" evidence="2">
    <location>
        <begin position="208"/>
        <end position="315"/>
    </location>
</feature>
<feature type="region of interest" description="Basic motif" evidence="1">
    <location>
        <begin position="302"/>
        <end position="315"/>
    </location>
</feature>
<feature type="region of interest" description="Helix-loop-helix motif" evidence="1">
    <location>
        <begin position="316"/>
        <end position="356"/>
    </location>
</feature>
<feature type="region of interest" description="Disordered" evidence="2">
    <location>
        <begin position="371"/>
        <end position="399"/>
    </location>
</feature>
<feature type="compositionally biased region" description="Low complexity" evidence="2">
    <location>
        <begin position="78"/>
        <end position="90"/>
    </location>
</feature>
<feature type="compositionally biased region" description="Low complexity" evidence="2">
    <location>
        <begin position="97"/>
        <end position="116"/>
    </location>
</feature>
<feature type="compositionally biased region" description="Polar residues" evidence="2">
    <location>
        <begin position="274"/>
        <end position="293"/>
    </location>
</feature>
<feature type="compositionally biased region" description="Basic and acidic residues" evidence="2">
    <location>
        <begin position="296"/>
        <end position="315"/>
    </location>
</feature>
<feature type="compositionally biased region" description="Basic and acidic residues" evidence="2">
    <location>
        <begin position="375"/>
        <end position="386"/>
    </location>
</feature>
<feature type="mutagenesis site" description="In bx108; enhances the loss of male-specific genital sensilla (simple sense organs) known as rays, on a lin-32 mutant background. Slightly reduces binding to DNA as a heterodimer with lin-32." evidence="3">
    <original>R</original>
    <variation>H</variation>
    <location>
        <position position="316"/>
    </location>
</feature>
<feature type="mutagenesis site" description="In bx115; enhances the loss of male-specific genital sensilla (simple sense organs) known as rays, on a lin-32 mutant background. Causes defects in all three ray cell types. Slightly reduces binding to DNA as a heterodimer with lin-32." evidence="3">
    <original>V</original>
    <variation>M</variation>
    <location>
        <position position="352"/>
    </location>
</feature>
<feature type="sequence conflict" description="In Ref. 1; AAA21347/AAC13874." evidence="13" ref="1">
    <original>Q</original>
    <variation>P</variation>
    <location>
        <position position="210"/>
    </location>
</feature>
<feature type="sequence conflict" description="In Ref. 1; AAA21347/AAC13874." evidence="13" ref="1">
    <original>N</original>
    <variation>H</variation>
    <location>
        <position position="224"/>
    </location>
</feature>
<feature type="sequence conflict" description="In Ref. 1; AAA21347/AAC13874." evidence="13" ref="1">
    <original>H</original>
    <variation>Y</variation>
    <location>
        <position position="347"/>
    </location>
</feature>
<dbReference type="EMBL" id="U13614">
    <property type="protein sequence ID" value="AAA21347.1"/>
    <property type="molecule type" value="mRNA"/>
</dbReference>
<dbReference type="EMBL" id="U30248">
    <property type="protein sequence ID" value="AAC13874.1"/>
    <property type="molecule type" value="Genomic_DNA"/>
</dbReference>
<dbReference type="EMBL" id="BX284601">
    <property type="protein sequence ID" value="CAA95837.1"/>
    <property type="molecule type" value="Genomic_DNA"/>
</dbReference>
<dbReference type="PIR" id="T18853">
    <property type="entry name" value="T18853"/>
</dbReference>
<dbReference type="RefSeq" id="NP_001021581.1">
    <property type="nucleotide sequence ID" value="NM_001026410.5"/>
</dbReference>
<dbReference type="SMR" id="G5EEG9"/>
<dbReference type="FunCoup" id="G5EEG9">
    <property type="interactions" value="62"/>
</dbReference>
<dbReference type="IntAct" id="G5EEG9">
    <property type="interactions" value="16"/>
</dbReference>
<dbReference type="STRING" id="6239.M05B5.5a.1"/>
<dbReference type="PaxDb" id="6239-M05B5.5a"/>
<dbReference type="PeptideAtlas" id="G5EEG9"/>
<dbReference type="EnsemblMetazoa" id="M05B5.5a.1">
    <property type="protein sequence ID" value="M05B5.5a.1"/>
    <property type="gene ID" value="WBGene00001949"/>
</dbReference>
<dbReference type="GeneID" id="172458"/>
<dbReference type="KEGG" id="cel:CELE_M05B5.5"/>
<dbReference type="AGR" id="WB:WBGene00001949"/>
<dbReference type="CTD" id="172458"/>
<dbReference type="WormBase" id="M05B5.5a">
    <property type="protein sequence ID" value="CE06191"/>
    <property type="gene ID" value="WBGene00001949"/>
    <property type="gene designation" value="hlh-2"/>
</dbReference>
<dbReference type="eggNOG" id="KOG3910">
    <property type="taxonomic scope" value="Eukaryota"/>
</dbReference>
<dbReference type="GeneTree" id="ENSGT00940000168822"/>
<dbReference type="HOGENOM" id="CLU_700646_0_0_1"/>
<dbReference type="InParanoid" id="G5EEG9"/>
<dbReference type="OMA" id="DAMSSMY"/>
<dbReference type="OrthoDB" id="10034090at2759"/>
<dbReference type="PhylomeDB" id="G5EEG9"/>
<dbReference type="Reactome" id="R-CEL-525793">
    <property type="pathway name" value="Myogenesis"/>
</dbReference>
<dbReference type="PRO" id="PR:G5EEG9"/>
<dbReference type="Proteomes" id="UP000001940">
    <property type="component" value="Chromosome I"/>
</dbReference>
<dbReference type="Bgee" id="WBGene00001949">
    <property type="expression patterns" value="Expressed in embryo and 4 other cell types or tissues"/>
</dbReference>
<dbReference type="GO" id="GO:0005737">
    <property type="term" value="C:cytoplasm"/>
    <property type="evidence" value="ECO:0000314"/>
    <property type="project" value="WormBase"/>
</dbReference>
<dbReference type="GO" id="GO:0005634">
    <property type="term" value="C:nucleus"/>
    <property type="evidence" value="ECO:0000314"/>
    <property type="project" value="WormBase"/>
</dbReference>
<dbReference type="GO" id="GO:0090575">
    <property type="term" value="C:RNA polymerase II transcription regulator complex"/>
    <property type="evidence" value="ECO:0000314"/>
    <property type="project" value="WormBase"/>
</dbReference>
<dbReference type="GO" id="GO:0043425">
    <property type="term" value="F:bHLH transcription factor binding"/>
    <property type="evidence" value="ECO:0000353"/>
    <property type="project" value="WormBase"/>
</dbReference>
<dbReference type="GO" id="GO:0000981">
    <property type="term" value="F:DNA-binding transcription factor activity, RNA polymerase II-specific"/>
    <property type="evidence" value="ECO:0000314"/>
    <property type="project" value="WormBase"/>
</dbReference>
<dbReference type="GO" id="GO:0046982">
    <property type="term" value="F:protein heterodimerization activity"/>
    <property type="evidence" value="ECO:0000353"/>
    <property type="project" value="WormBase"/>
</dbReference>
<dbReference type="GO" id="GO:0042803">
    <property type="term" value="F:protein homodimerization activity"/>
    <property type="evidence" value="ECO:0000353"/>
    <property type="project" value="WormBase"/>
</dbReference>
<dbReference type="GO" id="GO:0000978">
    <property type="term" value="F:RNA polymerase II cis-regulatory region sequence-specific DNA binding"/>
    <property type="evidence" value="ECO:0000315"/>
    <property type="project" value="UniProtKB"/>
</dbReference>
<dbReference type="GO" id="GO:0000977">
    <property type="term" value="F:RNA polymerase II transcription regulatory region sequence-specific DNA binding"/>
    <property type="evidence" value="ECO:0000314"/>
    <property type="project" value="WormBase"/>
</dbReference>
<dbReference type="GO" id="GO:0043565">
    <property type="term" value="F:sequence-specific DNA binding"/>
    <property type="evidence" value="ECO:0000314"/>
    <property type="project" value="WormBase"/>
</dbReference>
<dbReference type="GO" id="GO:0034769">
    <property type="term" value="P:basement membrane disassembly"/>
    <property type="evidence" value="ECO:0000315"/>
    <property type="project" value="UniProtKB"/>
</dbReference>
<dbReference type="GO" id="GO:0010171">
    <property type="term" value="P:body morphogenesis"/>
    <property type="evidence" value="ECO:0000315"/>
    <property type="project" value="WormBase"/>
</dbReference>
<dbReference type="GO" id="GO:0001708">
    <property type="term" value="P:cell fate specification"/>
    <property type="evidence" value="ECO:0000315"/>
    <property type="project" value="UniProtKB"/>
</dbReference>
<dbReference type="GO" id="GO:0009792">
    <property type="term" value="P:embryo development ending in birth or egg hatching"/>
    <property type="evidence" value="ECO:0000315"/>
    <property type="project" value="WormBase"/>
</dbReference>
<dbReference type="GO" id="GO:0030718">
    <property type="term" value="P:germ-line stem cell population maintenance"/>
    <property type="evidence" value="ECO:0000315"/>
    <property type="project" value="UniProtKB"/>
</dbReference>
<dbReference type="GO" id="GO:0008406">
    <property type="term" value="P:gonad development"/>
    <property type="evidence" value="ECO:0000315"/>
    <property type="project" value="WormBase"/>
</dbReference>
<dbReference type="GO" id="GO:0035262">
    <property type="term" value="P:gonad morphogenesis"/>
    <property type="evidence" value="ECO:0000315"/>
    <property type="project" value="UniProtKB"/>
</dbReference>
<dbReference type="GO" id="GO:0002119">
    <property type="term" value="P:nematode larval development"/>
    <property type="evidence" value="ECO:0000315"/>
    <property type="project" value="WormBase"/>
</dbReference>
<dbReference type="GO" id="GO:0045138">
    <property type="term" value="P:nematode male tail tip morphogenesis"/>
    <property type="evidence" value="ECO:0000315"/>
    <property type="project" value="WormBase"/>
</dbReference>
<dbReference type="GO" id="GO:0014018">
    <property type="term" value="P:neuroblast fate specification"/>
    <property type="evidence" value="ECO:0000315"/>
    <property type="project" value="WormBase"/>
</dbReference>
<dbReference type="GO" id="GO:0048666">
    <property type="term" value="P:neuron development"/>
    <property type="evidence" value="ECO:0000316"/>
    <property type="project" value="WormBase"/>
</dbReference>
<dbReference type="GO" id="GO:0048665">
    <property type="term" value="P:neuron fate specification"/>
    <property type="evidence" value="ECO:0000315"/>
    <property type="project" value="UniProtKB"/>
</dbReference>
<dbReference type="GO" id="GO:1903356">
    <property type="term" value="P:positive regulation of distal tip cell migration"/>
    <property type="evidence" value="ECO:0000315"/>
    <property type="project" value="UniProtKB"/>
</dbReference>
<dbReference type="GO" id="GO:0010628">
    <property type="term" value="P:positive regulation of gene expression"/>
    <property type="evidence" value="ECO:0000315"/>
    <property type="project" value="UniProtKB"/>
</dbReference>
<dbReference type="GO" id="GO:0043068">
    <property type="term" value="P:positive regulation of programmed cell death"/>
    <property type="evidence" value="ECO:0000315"/>
    <property type="project" value="WormBase"/>
</dbReference>
<dbReference type="GO" id="GO:0045944">
    <property type="term" value="P:positive regulation of transcription by RNA polymerase II"/>
    <property type="evidence" value="ECO:0000315"/>
    <property type="project" value="UniProtKB"/>
</dbReference>
<dbReference type="GO" id="GO:1903578">
    <property type="term" value="P:regulation of ATP metabolic process"/>
    <property type="evidence" value="ECO:0000315"/>
    <property type="project" value="UniProtKB"/>
</dbReference>
<dbReference type="GO" id="GO:2000114">
    <property type="term" value="P:regulation of establishment of cell polarity"/>
    <property type="evidence" value="ECO:0000315"/>
    <property type="project" value="UniProtKB"/>
</dbReference>
<dbReference type="GO" id="GO:0043467">
    <property type="term" value="P:regulation of generation of precursor metabolites and energy"/>
    <property type="evidence" value="ECO:0000315"/>
    <property type="project" value="UniProtKB"/>
</dbReference>
<dbReference type="GO" id="GO:0006357">
    <property type="term" value="P:regulation of transcription by RNA polymerase II"/>
    <property type="evidence" value="ECO:0000314"/>
    <property type="project" value="WormBase"/>
</dbReference>
<dbReference type="GO" id="GO:0022414">
    <property type="term" value="P:reproductive process"/>
    <property type="evidence" value="ECO:0000315"/>
    <property type="project" value="WormBase"/>
</dbReference>
<dbReference type="GO" id="GO:0032094">
    <property type="term" value="P:response to food"/>
    <property type="evidence" value="ECO:0000315"/>
    <property type="project" value="UniProtKB"/>
</dbReference>
<dbReference type="GO" id="GO:0040025">
    <property type="term" value="P:vulval development"/>
    <property type="evidence" value="ECO:0000315"/>
    <property type="project" value="UniProtKB"/>
</dbReference>
<dbReference type="CDD" id="cd18943">
    <property type="entry name" value="bHLH_E-protein_E47-like"/>
    <property type="match status" value="1"/>
</dbReference>
<dbReference type="FunFam" id="4.10.280.10:FF:000132">
    <property type="entry name" value="CRE-HLH-2 protein"/>
    <property type="match status" value="1"/>
</dbReference>
<dbReference type="Gene3D" id="4.10.280.10">
    <property type="entry name" value="Helix-loop-helix DNA-binding domain"/>
    <property type="match status" value="1"/>
</dbReference>
<dbReference type="InterPro" id="IPR011598">
    <property type="entry name" value="bHLH_dom"/>
</dbReference>
<dbReference type="InterPro" id="IPR036638">
    <property type="entry name" value="HLH_DNA-bd_sf"/>
</dbReference>
<dbReference type="InterPro" id="IPR051098">
    <property type="entry name" value="NeuroDiff_E-box_TFs"/>
</dbReference>
<dbReference type="PANTHER" id="PTHR11793">
    <property type="entry name" value="BASIC HELIX-LOOP-HELIX TRANSCRIPTION FACTOR"/>
    <property type="match status" value="1"/>
</dbReference>
<dbReference type="PANTHER" id="PTHR11793:SF13">
    <property type="entry name" value="PROTEIN DAUGHTERLESS"/>
    <property type="match status" value="1"/>
</dbReference>
<dbReference type="Pfam" id="PF00010">
    <property type="entry name" value="HLH"/>
    <property type="match status" value="1"/>
</dbReference>
<dbReference type="SMART" id="SM00353">
    <property type="entry name" value="HLH"/>
    <property type="match status" value="1"/>
</dbReference>
<dbReference type="SUPFAM" id="SSF47459">
    <property type="entry name" value="HLH, helix-loop-helix DNA-binding domain"/>
    <property type="match status" value="1"/>
</dbReference>
<dbReference type="PROSITE" id="PS50888">
    <property type="entry name" value="BHLH"/>
    <property type="match status" value="1"/>
</dbReference>